<feature type="chain" id="PRO_1000090244" description="Cobyric acid synthase">
    <location>
        <begin position="1"/>
        <end position="506"/>
    </location>
</feature>
<feature type="domain" description="GATase cobBQ-type" evidence="1">
    <location>
        <begin position="251"/>
        <end position="448"/>
    </location>
</feature>
<feature type="active site" description="Nucleophile" evidence="1">
    <location>
        <position position="332"/>
    </location>
</feature>
<feature type="active site" evidence="1">
    <location>
        <position position="440"/>
    </location>
</feature>
<keyword id="KW-0169">Cobalamin biosynthesis</keyword>
<keyword id="KW-0315">Glutamine amidotransferase</keyword>
<protein>
    <recommendedName>
        <fullName evidence="1">Cobyric acid synthase</fullName>
    </recommendedName>
</protein>
<evidence type="ECO:0000255" key="1">
    <source>
        <dbReference type="HAMAP-Rule" id="MF_00028"/>
    </source>
</evidence>
<gene>
    <name evidence="1" type="primary">cobQ</name>
    <name type="ordered locus">SeD_A2354</name>
</gene>
<dbReference type="EMBL" id="CP001144">
    <property type="protein sequence ID" value="ACH75170.1"/>
    <property type="molecule type" value="Genomic_DNA"/>
</dbReference>
<dbReference type="RefSeq" id="WP_000189667.1">
    <property type="nucleotide sequence ID" value="NC_011205.1"/>
</dbReference>
<dbReference type="SMR" id="B5FLY7"/>
<dbReference type="KEGG" id="sed:SeD_A2354"/>
<dbReference type="HOGENOM" id="CLU_019250_2_2_6"/>
<dbReference type="UniPathway" id="UPA00148"/>
<dbReference type="Proteomes" id="UP000008322">
    <property type="component" value="Chromosome"/>
</dbReference>
<dbReference type="GO" id="GO:0015420">
    <property type="term" value="F:ABC-type vitamin B12 transporter activity"/>
    <property type="evidence" value="ECO:0007669"/>
    <property type="project" value="UniProtKB-UniRule"/>
</dbReference>
<dbReference type="GO" id="GO:0003824">
    <property type="term" value="F:catalytic activity"/>
    <property type="evidence" value="ECO:0007669"/>
    <property type="project" value="InterPro"/>
</dbReference>
<dbReference type="GO" id="GO:0009236">
    <property type="term" value="P:cobalamin biosynthetic process"/>
    <property type="evidence" value="ECO:0007669"/>
    <property type="project" value="UniProtKB-UniRule"/>
</dbReference>
<dbReference type="CDD" id="cd05389">
    <property type="entry name" value="CobQ_N"/>
    <property type="match status" value="1"/>
</dbReference>
<dbReference type="CDD" id="cd01750">
    <property type="entry name" value="GATase1_CobQ"/>
    <property type="match status" value="1"/>
</dbReference>
<dbReference type="Gene3D" id="3.40.50.880">
    <property type="match status" value="1"/>
</dbReference>
<dbReference type="Gene3D" id="3.40.50.300">
    <property type="entry name" value="P-loop containing nucleotide triphosphate hydrolases"/>
    <property type="match status" value="1"/>
</dbReference>
<dbReference type="HAMAP" id="MF_00028">
    <property type="entry name" value="CobQ"/>
    <property type="match status" value="1"/>
</dbReference>
<dbReference type="InterPro" id="IPR029062">
    <property type="entry name" value="Class_I_gatase-like"/>
</dbReference>
<dbReference type="InterPro" id="IPR002586">
    <property type="entry name" value="CobQ/CobB/MinD/ParA_Nub-bd_dom"/>
</dbReference>
<dbReference type="InterPro" id="IPR033949">
    <property type="entry name" value="CobQ_GATase1"/>
</dbReference>
<dbReference type="InterPro" id="IPR047045">
    <property type="entry name" value="CobQ_N"/>
</dbReference>
<dbReference type="InterPro" id="IPR004459">
    <property type="entry name" value="CobQ_synth"/>
</dbReference>
<dbReference type="InterPro" id="IPR011698">
    <property type="entry name" value="GATase_3"/>
</dbReference>
<dbReference type="InterPro" id="IPR027417">
    <property type="entry name" value="P-loop_NTPase"/>
</dbReference>
<dbReference type="NCBIfam" id="TIGR00313">
    <property type="entry name" value="cobQ"/>
    <property type="match status" value="1"/>
</dbReference>
<dbReference type="NCBIfam" id="NF001989">
    <property type="entry name" value="PRK00784.1"/>
    <property type="match status" value="1"/>
</dbReference>
<dbReference type="PANTHER" id="PTHR21343:SF1">
    <property type="entry name" value="COBYRIC ACID SYNTHASE"/>
    <property type="match status" value="1"/>
</dbReference>
<dbReference type="PANTHER" id="PTHR21343">
    <property type="entry name" value="DETHIOBIOTIN SYNTHETASE"/>
    <property type="match status" value="1"/>
</dbReference>
<dbReference type="Pfam" id="PF01656">
    <property type="entry name" value="CbiA"/>
    <property type="match status" value="1"/>
</dbReference>
<dbReference type="Pfam" id="PF07685">
    <property type="entry name" value="GATase_3"/>
    <property type="match status" value="1"/>
</dbReference>
<dbReference type="SUPFAM" id="SSF52317">
    <property type="entry name" value="Class I glutamine amidotransferase-like"/>
    <property type="match status" value="1"/>
</dbReference>
<dbReference type="SUPFAM" id="SSF52540">
    <property type="entry name" value="P-loop containing nucleoside triphosphate hydrolases"/>
    <property type="match status" value="1"/>
</dbReference>
<dbReference type="PROSITE" id="PS51274">
    <property type="entry name" value="GATASE_COBBQ"/>
    <property type="match status" value="1"/>
</dbReference>
<proteinExistence type="inferred from homology"/>
<reference key="1">
    <citation type="journal article" date="2011" name="J. Bacteriol.">
        <title>Comparative genomics of 28 Salmonella enterica isolates: evidence for CRISPR-mediated adaptive sublineage evolution.</title>
        <authorList>
            <person name="Fricke W.F."/>
            <person name="Mammel M.K."/>
            <person name="McDermott P.F."/>
            <person name="Tartera C."/>
            <person name="White D.G."/>
            <person name="Leclerc J.E."/>
            <person name="Ravel J."/>
            <person name="Cebula T.A."/>
        </authorList>
    </citation>
    <scope>NUCLEOTIDE SEQUENCE [LARGE SCALE GENOMIC DNA]</scope>
    <source>
        <strain>CT_02021853</strain>
    </source>
</reference>
<organism>
    <name type="scientific">Salmonella dublin (strain CT_02021853)</name>
    <dbReference type="NCBI Taxonomy" id="439851"/>
    <lineage>
        <taxon>Bacteria</taxon>
        <taxon>Pseudomonadati</taxon>
        <taxon>Pseudomonadota</taxon>
        <taxon>Gammaproteobacteria</taxon>
        <taxon>Enterobacterales</taxon>
        <taxon>Enterobacteriaceae</taxon>
        <taxon>Salmonella</taxon>
    </lineage>
</organism>
<accession>B5FLY7</accession>
<sequence>MTQAVMLQGTASDVGKSVLAAGLCRIFYQDGLRTAPFKSQNMALNSGITSDGKEMGRAQIFQAEAAGITPDVRMNPVLLKPTSDRQAQVVLMGKVATNMDAVSYHDYKPRLREQILAVYNSLAQEYDVIVLEGAGSPAEINLRDRDIVNMGMAEMAQCPVILVADIDRGGVFAAIYGTLALLHKQERDRVKGVIINKFRGDVALLYSGIEQIESLTGVPVLGVMPWLDVDLEDEDGVALQNDKYRGNAPRDITIAIVQLPHISNFTDFNALAAQPDVRIRYIRRPEALTDADLVILPGSKNTLSDLAWLRESGMADALLQTHRQGVPVMGICGGYQMLGDTIVDEVESGLGTQPGLGLLNTITRFAQDKITTQVNATMSGELPSWLAAAAGLPVRGYEIHMGETVLQEGCCTAMTLQKNGCSVADGAVTADGLAFGTYLHGLFDSDAFTRAVVNGLRARKGLAPWETTFCYAEHKARQFDLLAEAMRQHIDIDKIYTIMQQHQEPV</sequence>
<comment type="function">
    <text evidence="1">Catalyzes amidations at positions B, D, E, and G on adenosylcobyrinic A,C-diamide. NH(2) groups are provided by glutamine, and one molecule of ATP is hydrogenolyzed for each amidation.</text>
</comment>
<comment type="pathway">
    <text evidence="1">Cofactor biosynthesis; adenosylcobalamin biosynthesis.</text>
</comment>
<comment type="similarity">
    <text evidence="1">Belongs to the CobB/CobQ family. CobQ subfamily.</text>
</comment>
<name>COBQ_SALDC</name>